<accession>B6DCP6</accession>
<name>TX301_LYCSI</name>
<dbReference type="EMBL" id="EU925980">
    <property type="protein sequence ID" value="ACI41312.1"/>
    <property type="molecule type" value="mRNA"/>
</dbReference>
<dbReference type="EMBL" id="FM863984">
    <property type="protein sequence ID" value="CAS03582.1"/>
    <property type="molecule type" value="mRNA"/>
</dbReference>
<dbReference type="SMR" id="B6DCP6"/>
<dbReference type="ArachnoServer" id="AS000929">
    <property type="toxin name" value="U3-lycotoxin-Ls1w"/>
</dbReference>
<dbReference type="GO" id="GO:0005576">
    <property type="term" value="C:extracellular region"/>
    <property type="evidence" value="ECO:0007669"/>
    <property type="project" value="UniProtKB-SubCell"/>
</dbReference>
<dbReference type="GO" id="GO:0090729">
    <property type="term" value="F:toxin activity"/>
    <property type="evidence" value="ECO:0007669"/>
    <property type="project" value="UniProtKB-KW"/>
</dbReference>
<dbReference type="InterPro" id="IPR019553">
    <property type="entry name" value="Spider_toxin_CSTX_knottin"/>
</dbReference>
<dbReference type="InterPro" id="IPR011142">
    <property type="entry name" value="Spider_toxin_CSTX_Knottin_CS"/>
</dbReference>
<dbReference type="Pfam" id="PF10530">
    <property type="entry name" value="Toxin_35"/>
    <property type="match status" value="1"/>
</dbReference>
<dbReference type="PROSITE" id="PS60029">
    <property type="entry name" value="SPIDER_CSTX"/>
    <property type="match status" value="1"/>
</dbReference>
<keyword id="KW-1015">Disulfide bond</keyword>
<keyword id="KW-0960">Knottin</keyword>
<keyword id="KW-0964">Secreted</keyword>
<keyword id="KW-0732">Signal</keyword>
<keyword id="KW-0800">Toxin</keyword>
<sequence length="108" mass="12422">MKFVLLFGVLLVTLFSYSSAEMLDDFDQADEDELLSLIEKEEARAKECTPRFYDCSHDRHSCCRSELFKDVCTCFYPEGGDNEVCTCQQPKHLKYMEKAAGKIKNLFG</sequence>
<evidence type="ECO:0000250" key="1"/>
<evidence type="ECO:0000255" key="2"/>
<evidence type="ECO:0000305" key="3"/>
<proteinExistence type="evidence at transcript level"/>
<comment type="subcellular location">
    <subcellularLocation>
        <location evidence="1">Secreted</location>
    </subcellularLocation>
</comment>
<comment type="tissue specificity">
    <text>Expressed by the venom gland.</text>
</comment>
<comment type="domain">
    <text evidence="1">The presence of a 'disulfide through disulfide knot' structurally defines this protein as a knottin.</text>
</comment>
<comment type="similarity">
    <text evidence="3">Belongs to the neurotoxin 19 (CSTX) family. 01 subfamily.</text>
</comment>
<reference key="1">
    <citation type="journal article" date="2010" name="Zoology">
        <title>Transcriptome analysis of the venom glands of the Chinese wolf spider Lycosa singoriensis.</title>
        <authorList>
            <person name="Zhang Y."/>
            <person name="Chen J."/>
            <person name="Tang X."/>
            <person name="Wang F."/>
            <person name="Jiang L."/>
            <person name="Xiong X."/>
            <person name="Wang M."/>
            <person name="Rong M."/>
            <person name="Liu Z."/>
            <person name="Liang S."/>
        </authorList>
    </citation>
    <scope>NUCLEOTIDE SEQUENCE [LARGE SCALE MRNA]</scope>
    <source>
        <tissue>Venom gland</tissue>
    </source>
</reference>
<protein>
    <recommendedName>
        <fullName>U3-lycotoxin-Ls1w</fullName>
    </recommendedName>
    <alternativeName>
        <fullName>Toxin-like structure LSTX-B1</fullName>
    </alternativeName>
</protein>
<feature type="signal peptide" evidence="2">
    <location>
        <begin position="1"/>
        <end position="20"/>
    </location>
</feature>
<feature type="propeptide" id="PRO_0000401609" evidence="1">
    <location>
        <begin position="21"/>
        <end position="44"/>
    </location>
</feature>
<feature type="chain" id="PRO_0000401610" description="U3-lycotoxin-Ls1w">
    <location>
        <begin position="45"/>
        <end position="108"/>
    </location>
</feature>
<feature type="disulfide bond" evidence="1">
    <location>
        <begin position="48"/>
        <end position="63"/>
    </location>
</feature>
<feature type="disulfide bond" evidence="1">
    <location>
        <begin position="55"/>
        <end position="72"/>
    </location>
</feature>
<feature type="disulfide bond" evidence="1">
    <location>
        <begin position="62"/>
        <end position="87"/>
    </location>
</feature>
<feature type="disulfide bond" evidence="1">
    <location>
        <begin position="74"/>
        <end position="85"/>
    </location>
</feature>
<organism>
    <name type="scientific">Lycosa singoriensis</name>
    <name type="common">Wolf spider</name>
    <name type="synonym">Aranea singoriensis</name>
    <dbReference type="NCBI Taxonomy" id="434756"/>
    <lineage>
        <taxon>Eukaryota</taxon>
        <taxon>Metazoa</taxon>
        <taxon>Ecdysozoa</taxon>
        <taxon>Arthropoda</taxon>
        <taxon>Chelicerata</taxon>
        <taxon>Arachnida</taxon>
        <taxon>Araneae</taxon>
        <taxon>Araneomorphae</taxon>
        <taxon>Entelegynae</taxon>
        <taxon>Lycosoidea</taxon>
        <taxon>Lycosidae</taxon>
        <taxon>Lycosa</taxon>
    </lineage>
</organism>